<feature type="chain" id="PRO_1000191248" description="Probable septum site-determining protein MinC">
    <location>
        <begin position="1"/>
        <end position="231"/>
    </location>
</feature>
<feature type="region of interest" description="Disordered" evidence="2">
    <location>
        <begin position="102"/>
        <end position="125"/>
    </location>
</feature>
<comment type="function">
    <text evidence="1">Cell division inhibitor that blocks the formation of polar Z ring septums. Rapidly oscillates between the poles of the cell to destabilize FtsZ filaments that have formed before they mature into polar Z rings. Prevents FtsZ polymerization.</text>
</comment>
<comment type="subunit">
    <text evidence="1">Interacts with MinD and FtsZ.</text>
</comment>
<comment type="similarity">
    <text evidence="1">Belongs to the MinC family.</text>
</comment>
<reference key="1">
    <citation type="journal article" date="2009" name="PLoS Genet.">
        <title>Organised genome dynamics in the Escherichia coli species results in highly diverse adaptive paths.</title>
        <authorList>
            <person name="Touchon M."/>
            <person name="Hoede C."/>
            <person name="Tenaillon O."/>
            <person name="Barbe V."/>
            <person name="Baeriswyl S."/>
            <person name="Bidet P."/>
            <person name="Bingen E."/>
            <person name="Bonacorsi S."/>
            <person name="Bouchier C."/>
            <person name="Bouvet O."/>
            <person name="Calteau A."/>
            <person name="Chiapello H."/>
            <person name="Clermont O."/>
            <person name="Cruveiller S."/>
            <person name="Danchin A."/>
            <person name="Diard M."/>
            <person name="Dossat C."/>
            <person name="Karoui M.E."/>
            <person name="Frapy E."/>
            <person name="Garry L."/>
            <person name="Ghigo J.M."/>
            <person name="Gilles A.M."/>
            <person name="Johnson J."/>
            <person name="Le Bouguenec C."/>
            <person name="Lescat M."/>
            <person name="Mangenot S."/>
            <person name="Martinez-Jehanne V."/>
            <person name="Matic I."/>
            <person name="Nassif X."/>
            <person name="Oztas S."/>
            <person name="Petit M.A."/>
            <person name="Pichon C."/>
            <person name="Rouy Z."/>
            <person name="Ruf C.S."/>
            <person name="Schneider D."/>
            <person name="Tourret J."/>
            <person name="Vacherie B."/>
            <person name="Vallenet D."/>
            <person name="Medigue C."/>
            <person name="Rocha E.P.C."/>
            <person name="Denamur E."/>
        </authorList>
    </citation>
    <scope>NUCLEOTIDE SEQUENCE [LARGE SCALE GENOMIC DNA]</scope>
    <source>
        <strain>IAI39 / ExPEC</strain>
    </source>
</reference>
<organism>
    <name type="scientific">Escherichia coli O7:K1 (strain IAI39 / ExPEC)</name>
    <dbReference type="NCBI Taxonomy" id="585057"/>
    <lineage>
        <taxon>Bacteria</taxon>
        <taxon>Pseudomonadati</taxon>
        <taxon>Pseudomonadota</taxon>
        <taxon>Gammaproteobacteria</taxon>
        <taxon>Enterobacterales</taxon>
        <taxon>Enterobacteriaceae</taxon>
        <taxon>Escherichia</taxon>
    </lineage>
</organism>
<evidence type="ECO:0000255" key="1">
    <source>
        <dbReference type="HAMAP-Rule" id="MF_00267"/>
    </source>
</evidence>
<evidence type="ECO:0000256" key="2">
    <source>
        <dbReference type="SAM" id="MobiDB-lite"/>
    </source>
</evidence>
<protein>
    <recommendedName>
        <fullName evidence="1">Probable septum site-determining protein MinC</fullName>
    </recommendedName>
</protein>
<accession>B7NJG6</accession>
<proteinExistence type="inferred from homology"/>
<dbReference type="EMBL" id="CU928164">
    <property type="protein sequence ID" value="CAR18028.1"/>
    <property type="molecule type" value="Genomic_DNA"/>
</dbReference>
<dbReference type="RefSeq" id="WP_000072536.1">
    <property type="nucleotide sequence ID" value="NC_011750.1"/>
</dbReference>
<dbReference type="RefSeq" id="YP_002407874.1">
    <property type="nucleotide sequence ID" value="NC_011750.1"/>
</dbReference>
<dbReference type="SMR" id="B7NJG6"/>
<dbReference type="STRING" id="585057.ECIAI39_1897"/>
<dbReference type="GeneID" id="93776258"/>
<dbReference type="KEGG" id="ect:ECIAI39_1897"/>
<dbReference type="PATRIC" id="fig|585057.6.peg.1975"/>
<dbReference type="HOGENOM" id="CLU_067812_0_1_6"/>
<dbReference type="Proteomes" id="UP000000749">
    <property type="component" value="Chromosome"/>
</dbReference>
<dbReference type="GO" id="GO:0000902">
    <property type="term" value="P:cell morphogenesis"/>
    <property type="evidence" value="ECO:0007669"/>
    <property type="project" value="InterPro"/>
</dbReference>
<dbReference type="GO" id="GO:0000917">
    <property type="term" value="P:division septum assembly"/>
    <property type="evidence" value="ECO:0007669"/>
    <property type="project" value="UniProtKB-KW"/>
</dbReference>
<dbReference type="GO" id="GO:0051302">
    <property type="term" value="P:regulation of cell division"/>
    <property type="evidence" value="ECO:0007669"/>
    <property type="project" value="InterPro"/>
</dbReference>
<dbReference type="GO" id="GO:1901891">
    <property type="term" value="P:regulation of cell septum assembly"/>
    <property type="evidence" value="ECO:0007669"/>
    <property type="project" value="InterPro"/>
</dbReference>
<dbReference type="FunFam" id="2.160.20.70:FF:000002">
    <property type="entry name" value="Probable septum site-determining protein MinC"/>
    <property type="match status" value="1"/>
</dbReference>
<dbReference type="Gene3D" id="2.160.20.70">
    <property type="match status" value="1"/>
</dbReference>
<dbReference type="Gene3D" id="3.30.70.260">
    <property type="match status" value="1"/>
</dbReference>
<dbReference type="HAMAP" id="MF_00267">
    <property type="entry name" value="MinC"/>
    <property type="match status" value="1"/>
</dbReference>
<dbReference type="InterPro" id="IPR016098">
    <property type="entry name" value="CAP/MinC_C"/>
</dbReference>
<dbReference type="InterPro" id="IPR013033">
    <property type="entry name" value="MinC"/>
</dbReference>
<dbReference type="InterPro" id="IPR036145">
    <property type="entry name" value="MinC_C_sf"/>
</dbReference>
<dbReference type="InterPro" id="IPR007874">
    <property type="entry name" value="MinC_N"/>
</dbReference>
<dbReference type="InterPro" id="IPR005526">
    <property type="entry name" value="Septum_form_inhib_MinC_C"/>
</dbReference>
<dbReference type="NCBIfam" id="TIGR01222">
    <property type="entry name" value="minC"/>
    <property type="match status" value="1"/>
</dbReference>
<dbReference type="PANTHER" id="PTHR34108">
    <property type="entry name" value="SEPTUM SITE-DETERMINING PROTEIN MINC"/>
    <property type="match status" value="1"/>
</dbReference>
<dbReference type="PANTHER" id="PTHR34108:SF1">
    <property type="entry name" value="SEPTUM SITE-DETERMINING PROTEIN MINC"/>
    <property type="match status" value="1"/>
</dbReference>
<dbReference type="Pfam" id="PF03775">
    <property type="entry name" value="MinC_C"/>
    <property type="match status" value="1"/>
</dbReference>
<dbReference type="Pfam" id="PF05209">
    <property type="entry name" value="MinC_N"/>
    <property type="match status" value="1"/>
</dbReference>
<dbReference type="SUPFAM" id="SSF63848">
    <property type="entry name" value="Cell-division inhibitor MinC, C-terminal domain"/>
    <property type="match status" value="1"/>
</dbReference>
<gene>
    <name evidence="1" type="primary">minC</name>
    <name type="ordered locus">ECIAI39_1897</name>
</gene>
<keyword id="KW-0131">Cell cycle</keyword>
<keyword id="KW-0132">Cell division</keyword>
<keyword id="KW-0717">Septation</keyword>
<sequence>MSNTPIELKGSSFTLSVVHLHEAEPKVIHQALEDKIAQAPAFLKHAPVVLNVSALEDPVNWSAMHKAVSATGLRVIGVSGCKDAQLKAEIEKMGLPILTEGKEKAPRPAPAPQAPAQNTTPVTKTRLIDTPVRSGQRIYAPQCDLIVTSHVSAGAELIADGNIHVYGMMRGRALAGASGDRETQIFCTNLMAELVSIAGEYWLSDQIPAEFYGKAARLQLVENALTVQPLN</sequence>
<name>MINC_ECO7I</name>